<organism>
    <name type="scientific">Arabidopsis thaliana</name>
    <name type="common">Mouse-ear cress</name>
    <dbReference type="NCBI Taxonomy" id="3702"/>
    <lineage>
        <taxon>Eukaryota</taxon>
        <taxon>Viridiplantae</taxon>
        <taxon>Streptophyta</taxon>
        <taxon>Embryophyta</taxon>
        <taxon>Tracheophyta</taxon>
        <taxon>Spermatophyta</taxon>
        <taxon>Magnoliopsida</taxon>
        <taxon>eudicotyledons</taxon>
        <taxon>Gunneridae</taxon>
        <taxon>Pentapetalae</taxon>
        <taxon>rosids</taxon>
        <taxon>malvids</taxon>
        <taxon>Brassicales</taxon>
        <taxon>Brassicaceae</taxon>
        <taxon>Camelineae</taxon>
        <taxon>Arabidopsis</taxon>
    </lineage>
</organism>
<proteinExistence type="evidence at protein level"/>
<comment type="function">
    <text evidence="2">Calcium-permeable cation-selective channel conferring a broad-spectrum clubroot resistance by supporting cytosolic Ca(2+) increase in root pericycle cells (PubMed:37295403). Triggers immunity toward fungal pathogens such as Plasmodiophora brassicae (Pb) and induces defenses (PubMed:37295403). Also permeable to sodium ion Na(+) and possibly other cations (PubMed:37295403).</text>
</comment>
<comment type="catalytic activity">
    <reaction evidence="2">
        <text>Ca(2+)(in) = Ca(2+)(out)</text>
        <dbReference type="Rhea" id="RHEA:29671"/>
        <dbReference type="ChEBI" id="CHEBI:29108"/>
    </reaction>
</comment>
<comment type="catalytic activity">
    <reaction evidence="2">
        <text>Na(+)(in) = Na(+)(out)</text>
        <dbReference type="Rhea" id="RHEA:34963"/>
        <dbReference type="ChEBI" id="CHEBI:29101"/>
    </reaction>
</comment>
<comment type="subunit">
    <text evidence="2">Forms pentamers with a central pore to produce an ion channel.</text>
</comment>
<comment type="subcellular location">
    <subcellularLocation>
        <location evidence="2">Endoplasmic reticulum membrane</location>
        <topology evidence="1">Multi-pass membrane protein</topology>
    </subcellularLocation>
</comment>
<comment type="induction">
    <text evidence="2">Accumulates in the root pericycle upon Plasmodiophora brassicae (Pb) infection to prevent pathogen colonization in the root stele.</text>
</comment>
<comment type="caution">
    <text evidence="6">Present in strains resistant to Plasmodiophora brassicae isolate Dayi (PbDy) (e.g. cv. Est-1, cv. Nyl-2, cv. Shigu-1, cv. Slavi-1 and cv. Vie-0), but absent in the genome of the susceptible strain cv. Columbia. The strain cv. Landsberg erecta is also susceptible due to a promoter unable to induce its expression upon PbDy infection.</text>
</comment>
<evidence type="ECO:0000255" key="1"/>
<evidence type="ECO:0000269" key="2">
    <source>
    </source>
</evidence>
<evidence type="ECO:0000303" key="3">
    <source>
    </source>
</evidence>
<evidence type="ECO:0000303" key="4">
    <source ref="1"/>
</evidence>
<evidence type="ECO:0000305" key="5"/>
<evidence type="ECO:0000305" key="6">
    <source>
    </source>
</evidence>
<evidence type="ECO:0000312" key="7">
    <source>
        <dbReference type="EMBL" id="OAP15027.1"/>
    </source>
</evidence>
<accession>C5I9W9</accession>
<accession>A0A178W9D4</accession>
<gene>
    <name evidence="3" type="primary">WTS</name>
    <name evidence="3" type="synonym">C6</name>
    <name evidence="4" type="synonym">RPB1a</name>
    <name evidence="4" type="synonym">RPB1b</name>
    <name evidence="7" type="ordered locus">AXX17_At1g32710</name>
</gene>
<name>WTS_ARATH</name>
<sequence length="148" mass="16006">METVSAVNQTLPISGGEPVKFTTYSAAVHKVLVMINAGILGLLQLVSQQSSVLETHKAAFLCFCVFILFYAVLRVREAMDVRLQPGLVPRLIGHGSHLFGGLAALVLVSVVSTAFSIVLFLLWFIWLSAVVYLETNKPSACPPQLPPV</sequence>
<keyword id="KW-0106">Calcium</keyword>
<keyword id="KW-0107">Calcium channel</keyword>
<keyword id="KW-0109">Calcium transport</keyword>
<keyword id="KW-0256">Endoplasmic reticulum</keyword>
<keyword id="KW-0407">Ion channel</keyword>
<keyword id="KW-0406">Ion transport</keyword>
<keyword id="KW-0472">Membrane</keyword>
<keyword id="KW-0611">Plant defense</keyword>
<keyword id="KW-0732">Signal</keyword>
<keyword id="KW-0812">Transmembrane</keyword>
<keyword id="KW-1133">Transmembrane helix</keyword>
<keyword id="KW-0813">Transport</keyword>
<reference key="1">
    <citation type="submission" date="2009-03" db="EMBL/GenBank/DDBJ databases">
        <title>RPB1-mediated clubroot-resistance in Arabidopsis thaliana.</title>
        <authorList>
            <person name="Rehn F."/>
            <person name="Siemens J."/>
        </authorList>
    </citation>
    <scope>NUCLEOTIDE SEQUENCE [GENOMIC DNA]</scope>
    <source>
        <strain>cv. RLD</strain>
        <strain>cv. Tsu-0</strain>
    </source>
</reference>
<reference key="2">
    <citation type="journal article" date="2016" name="Proc. Natl. Acad. Sci. U.S.A.">
        <title>Chromosome-level assembly of Arabidopsis thaliana Ler reveals the extent of translocation and inversion polymorphisms.</title>
        <authorList>
            <person name="Zapata L."/>
            <person name="Ding J."/>
            <person name="Willing E.M."/>
            <person name="Hartwig B."/>
            <person name="Bezdan D."/>
            <person name="Jiao W.B."/>
            <person name="Patel V."/>
            <person name="Velikkakam James G."/>
            <person name="Koornneef M."/>
            <person name="Ossowski S."/>
            <person name="Schneeberger K."/>
        </authorList>
    </citation>
    <scope>NUCLEOTIDE SEQUENCE [LARGE SCALE GENOMIC DNA]</scope>
    <source>
        <strain>cv. Landsberg erecta</strain>
    </source>
</reference>
<reference key="3">
    <citation type="journal article" date="2023" name="Cell">
        <title>WeiTsing, a pericycle-expressed ion channel, safeguards the stele to confer clubroot resistance.</title>
        <authorList>
            <person name="Wang W."/>
            <person name="Qin L."/>
            <person name="Zhang W."/>
            <person name="Tang L."/>
            <person name="Zhang C."/>
            <person name="Dong X."/>
            <person name="Miao P."/>
            <person name="Shen M."/>
            <person name="Du H."/>
            <person name="Cheng H."/>
            <person name="Wang K."/>
            <person name="Zhang X."/>
            <person name="Su M."/>
            <person name="Lu H."/>
            <person name="Li C."/>
            <person name="Gao Q."/>
            <person name="Zhang X."/>
            <person name="Huang Y."/>
            <person name="Liang C."/>
            <person name="Zhou J.-M."/>
            <person name="Chen Y.-H."/>
        </authorList>
    </citation>
    <scope>FUNCTION</scope>
    <scope>MUTAGENESIS OF ALA-37</scope>
    <scope>INDUCTION BY PLASMODIOPHORA BRASSICAE</scope>
    <scope>SUBCELLULAR LOCATION</scope>
    <scope>SUBUNIT</scope>
    <scope>TOPOLOGY</scope>
    <scope>TRANSPORTER ACTIVITY</scope>
    <source>
        <strain>cv. Columbia</strain>
        <strain>cv. Est-1</strain>
        <strain>cv. Nyl-2</strain>
        <strain>cv. Shigu-1</strain>
        <strain>cv. Slavi-1</strain>
        <strain>cv. Vie-0</strain>
    </source>
</reference>
<protein>
    <recommendedName>
        <fullName evidence="3">Calcium-permeable cation-selective channel WeiTsing</fullName>
        <shortName evidence="3">Ca(2+)-permeable cation-selective channel WeiTsing</shortName>
    </recommendedName>
    <alternativeName>
        <fullName evidence="4">Protein RESISTANCE TO PLASMODIOPHORA BRASSICAE 1</fullName>
    </alternativeName>
</protein>
<dbReference type="EMBL" id="FJ807885">
    <property type="protein sequence ID" value="ACR61721.1"/>
    <property type="molecule type" value="Genomic_DNA"/>
</dbReference>
<dbReference type="EMBL" id="FJ807885">
    <property type="protein sequence ID" value="ACR61722.1"/>
    <property type="molecule type" value="Genomic_DNA"/>
</dbReference>
<dbReference type="EMBL" id="FN400762">
    <property type="protein sequence ID" value="CAZ64218.1"/>
    <property type="molecule type" value="Genomic_DNA"/>
</dbReference>
<dbReference type="EMBL" id="LUHQ01000001">
    <property type="protein sequence ID" value="OAP15027.1"/>
    <property type="molecule type" value="Genomic_DNA"/>
</dbReference>
<dbReference type="SMR" id="C5I9W9"/>
<dbReference type="OrthoDB" id="1110782at2759"/>
<dbReference type="Proteomes" id="UP000078284">
    <property type="component" value="Chromosome 1"/>
</dbReference>
<dbReference type="ExpressionAtlas" id="C5I9W9">
    <property type="expression patterns" value="baseline and differential"/>
</dbReference>
<dbReference type="GO" id="GO:0005789">
    <property type="term" value="C:endoplasmic reticulum membrane"/>
    <property type="evidence" value="ECO:0000314"/>
    <property type="project" value="UniProtKB"/>
</dbReference>
<dbReference type="GO" id="GO:0005262">
    <property type="term" value="F:calcium channel activity"/>
    <property type="evidence" value="ECO:0000314"/>
    <property type="project" value="UniProtKB"/>
</dbReference>
<dbReference type="GO" id="GO:0005261">
    <property type="term" value="F:monoatomic cation channel activity"/>
    <property type="evidence" value="ECO:0000314"/>
    <property type="project" value="UniProtKB"/>
</dbReference>
<dbReference type="GO" id="GO:0042803">
    <property type="term" value="F:protein homodimerization activity"/>
    <property type="evidence" value="ECO:0000314"/>
    <property type="project" value="UniProtKB"/>
</dbReference>
<dbReference type="GO" id="GO:0005272">
    <property type="term" value="F:sodium channel activity"/>
    <property type="evidence" value="ECO:0000314"/>
    <property type="project" value="UniProtKB"/>
</dbReference>
<dbReference type="GO" id="GO:0006816">
    <property type="term" value="P:calcium ion transport"/>
    <property type="evidence" value="ECO:0000314"/>
    <property type="project" value="UniProtKB"/>
</dbReference>
<dbReference type="GO" id="GO:0050832">
    <property type="term" value="P:defense response to fungus"/>
    <property type="evidence" value="ECO:0000314"/>
    <property type="project" value="UniProtKB"/>
</dbReference>
<dbReference type="GO" id="GO:0006812">
    <property type="term" value="P:monoatomic cation transport"/>
    <property type="evidence" value="ECO:0000314"/>
    <property type="project" value="UniProtKB"/>
</dbReference>
<dbReference type="GO" id="GO:0051259">
    <property type="term" value="P:protein complex oligomerization"/>
    <property type="evidence" value="ECO:0000314"/>
    <property type="project" value="UniProtKB"/>
</dbReference>
<dbReference type="GO" id="GO:0009620">
    <property type="term" value="P:response to fungus"/>
    <property type="evidence" value="ECO:0000270"/>
    <property type="project" value="UniProtKB"/>
</dbReference>
<dbReference type="GO" id="GO:0006814">
    <property type="term" value="P:sodium ion transport"/>
    <property type="evidence" value="ECO:0000314"/>
    <property type="project" value="UniProtKB"/>
</dbReference>
<dbReference type="InterPro" id="IPR053258">
    <property type="entry name" value="Ca-permeable_cation_channel"/>
</dbReference>
<dbReference type="PANTHER" id="PTHR34115">
    <property type="entry name" value="PROTEIN, PUTATIVE-RELATED"/>
    <property type="match status" value="1"/>
</dbReference>
<dbReference type="PANTHER" id="PTHR34115:SF13">
    <property type="entry name" value="RPB1A"/>
    <property type="match status" value="1"/>
</dbReference>
<feature type="signal peptide" evidence="1">
    <location>
        <begin position="1"/>
        <end status="unknown"/>
    </location>
</feature>
<feature type="chain" id="PRO_0000459121" description="Calcium-permeable cation-selective channel WeiTsing">
    <location>
        <begin status="unknown"/>
        <end position="148"/>
    </location>
</feature>
<feature type="topological domain" description="Cytoplasmic" evidence="6">
    <location>
        <begin position="1"/>
        <end position="25"/>
    </location>
</feature>
<feature type="transmembrane region" description="Helical; Name=1" evidence="1">
    <location>
        <begin position="26"/>
        <end position="46"/>
    </location>
</feature>
<feature type="topological domain" description="Lumenal" evidence="6">
    <location>
        <begin position="47"/>
        <end position="51"/>
    </location>
</feature>
<feature type="transmembrane region" description="Helical; Name=2" evidence="1">
    <location>
        <begin position="52"/>
        <end position="72"/>
    </location>
</feature>
<feature type="topological domain" description="Cytoplasmic" evidence="6">
    <location>
        <begin position="73"/>
        <end position="90"/>
    </location>
</feature>
<feature type="transmembrane region" description="Helical; Name=3" evidence="1">
    <location>
        <begin position="91"/>
        <end position="110"/>
    </location>
</feature>
<feature type="topological domain" description="Lumenal" evidence="6">
    <location>
        <begin position="111"/>
        <end position="116"/>
    </location>
</feature>
<feature type="transmembrane region" description="Helical; Name=4" evidence="1">
    <location>
        <begin position="117"/>
        <end position="133"/>
    </location>
</feature>
<feature type="topological domain" description="Cytoplasmic" evidence="6">
    <location>
        <begin position="134"/>
        <end position="148"/>
    </location>
</feature>
<feature type="mutagenesis site" description="Severely impaired channel activity leading to reduced ability to trigger defense responses starting with cytosolic Ca(2+) increase, but normal oligomerization." evidence="2">
    <original>A</original>
    <variation>W</variation>
    <variation>Y</variation>
    <location>
        <position position="37"/>
    </location>
</feature>
<feature type="sequence conflict" description="In Ref. 1; ACR61721/ACR61722/CAZ64218." evidence="5" ref="1">
    <original>I</original>
    <variation>V</variation>
    <location>
        <position position="35"/>
    </location>
</feature>